<organism>
    <name type="scientific">Bacillus cereus (strain ZK / E33L)</name>
    <dbReference type="NCBI Taxonomy" id="288681"/>
    <lineage>
        <taxon>Bacteria</taxon>
        <taxon>Bacillati</taxon>
        <taxon>Bacillota</taxon>
        <taxon>Bacilli</taxon>
        <taxon>Bacillales</taxon>
        <taxon>Bacillaceae</taxon>
        <taxon>Bacillus</taxon>
        <taxon>Bacillus cereus group</taxon>
    </lineage>
</organism>
<proteinExistence type="inferred from homology"/>
<accession>Q63HE8</accession>
<feature type="chain" id="PRO_0000190276" description="Recombination protein RecR">
    <location>
        <begin position="1"/>
        <end position="198"/>
    </location>
</feature>
<feature type="domain" description="Toprim" evidence="1">
    <location>
        <begin position="80"/>
        <end position="175"/>
    </location>
</feature>
<feature type="zinc finger region" description="C4-type" evidence="1">
    <location>
        <begin position="57"/>
        <end position="72"/>
    </location>
</feature>
<reference key="1">
    <citation type="journal article" date="2006" name="J. Bacteriol.">
        <title>Pathogenomic sequence analysis of Bacillus cereus and Bacillus thuringiensis isolates closely related to Bacillus anthracis.</title>
        <authorList>
            <person name="Han C.S."/>
            <person name="Xie G."/>
            <person name="Challacombe J.F."/>
            <person name="Altherr M.R."/>
            <person name="Bhotika S.S."/>
            <person name="Bruce D."/>
            <person name="Campbell C.S."/>
            <person name="Campbell M.L."/>
            <person name="Chen J."/>
            <person name="Chertkov O."/>
            <person name="Cleland C."/>
            <person name="Dimitrijevic M."/>
            <person name="Doggett N.A."/>
            <person name="Fawcett J.J."/>
            <person name="Glavina T."/>
            <person name="Goodwin L.A."/>
            <person name="Hill K.K."/>
            <person name="Hitchcock P."/>
            <person name="Jackson P.J."/>
            <person name="Keim P."/>
            <person name="Kewalramani A.R."/>
            <person name="Longmire J."/>
            <person name="Lucas S."/>
            <person name="Malfatti S."/>
            <person name="McMurry K."/>
            <person name="Meincke L.J."/>
            <person name="Misra M."/>
            <person name="Moseman B.L."/>
            <person name="Mundt M."/>
            <person name="Munk A.C."/>
            <person name="Okinaka R.T."/>
            <person name="Parson-Quintana B."/>
            <person name="Reilly L.P."/>
            <person name="Richardson P."/>
            <person name="Robinson D.L."/>
            <person name="Rubin E."/>
            <person name="Saunders E."/>
            <person name="Tapia R."/>
            <person name="Tesmer J.G."/>
            <person name="Thayer N."/>
            <person name="Thompson L.S."/>
            <person name="Tice H."/>
            <person name="Ticknor L.O."/>
            <person name="Wills P.L."/>
            <person name="Brettin T.S."/>
            <person name="Gilna P."/>
        </authorList>
    </citation>
    <scope>NUCLEOTIDE SEQUENCE [LARGE SCALE GENOMIC DNA]</scope>
    <source>
        <strain>ZK / E33L</strain>
    </source>
</reference>
<gene>
    <name evidence="1" type="primary">recR</name>
    <name type="ordered locus">BCE33L0021</name>
</gene>
<dbReference type="EMBL" id="CP000001">
    <property type="protein sequence ID" value="AAU20209.1"/>
    <property type="molecule type" value="Genomic_DNA"/>
</dbReference>
<dbReference type="RefSeq" id="WP_000559169.1">
    <property type="nucleotide sequence ID" value="NZ_CP009968.1"/>
</dbReference>
<dbReference type="SMR" id="Q63HE8"/>
<dbReference type="GeneID" id="93011050"/>
<dbReference type="KEGG" id="bcz:BCE33L0021"/>
<dbReference type="PATRIC" id="fig|288681.22.peg.135"/>
<dbReference type="Proteomes" id="UP000002612">
    <property type="component" value="Chromosome"/>
</dbReference>
<dbReference type="GO" id="GO:0003677">
    <property type="term" value="F:DNA binding"/>
    <property type="evidence" value="ECO:0007669"/>
    <property type="project" value="UniProtKB-UniRule"/>
</dbReference>
<dbReference type="GO" id="GO:0008270">
    <property type="term" value="F:zinc ion binding"/>
    <property type="evidence" value="ECO:0007669"/>
    <property type="project" value="UniProtKB-KW"/>
</dbReference>
<dbReference type="GO" id="GO:0006310">
    <property type="term" value="P:DNA recombination"/>
    <property type="evidence" value="ECO:0007669"/>
    <property type="project" value="UniProtKB-UniRule"/>
</dbReference>
<dbReference type="GO" id="GO:0006281">
    <property type="term" value="P:DNA repair"/>
    <property type="evidence" value="ECO:0007669"/>
    <property type="project" value="UniProtKB-UniRule"/>
</dbReference>
<dbReference type="CDD" id="cd01025">
    <property type="entry name" value="TOPRIM_recR"/>
    <property type="match status" value="1"/>
</dbReference>
<dbReference type="Gene3D" id="3.30.60.80">
    <property type="match status" value="1"/>
</dbReference>
<dbReference type="Gene3D" id="3.40.1360.10">
    <property type="match status" value="1"/>
</dbReference>
<dbReference type="Gene3D" id="6.10.250.240">
    <property type="match status" value="1"/>
</dbReference>
<dbReference type="Gene3D" id="1.10.8.420">
    <property type="entry name" value="RecR Domain 1"/>
    <property type="match status" value="1"/>
</dbReference>
<dbReference type="HAMAP" id="MF_00017">
    <property type="entry name" value="RecR"/>
    <property type="match status" value="1"/>
</dbReference>
<dbReference type="InterPro" id="IPR000093">
    <property type="entry name" value="DNA_Rcmb_RecR"/>
</dbReference>
<dbReference type="InterPro" id="IPR023627">
    <property type="entry name" value="Rcmb_RecR"/>
</dbReference>
<dbReference type="InterPro" id="IPR015967">
    <property type="entry name" value="Rcmb_RecR_Znf"/>
</dbReference>
<dbReference type="InterPro" id="IPR006171">
    <property type="entry name" value="TOPRIM_dom"/>
</dbReference>
<dbReference type="InterPro" id="IPR034137">
    <property type="entry name" value="TOPRIM_RecR"/>
</dbReference>
<dbReference type="NCBIfam" id="TIGR00615">
    <property type="entry name" value="recR"/>
    <property type="match status" value="1"/>
</dbReference>
<dbReference type="PANTHER" id="PTHR30446">
    <property type="entry name" value="RECOMBINATION PROTEIN RECR"/>
    <property type="match status" value="1"/>
</dbReference>
<dbReference type="PANTHER" id="PTHR30446:SF0">
    <property type="entry name" value="RECOMBINATION PROTEIN RECR"/>
    <property type="match status" value="1"/>
</dbReference>
<dbReference type="Pfam" id="PF21175">
    <property type="entry name" value="RecR_C"/>
    <property type="match status" value="1"/>
</dbReference>
<dbReference type="Pfam" id="PF21176">
    <property type="entry name" value="RecR_HhH"/>
    <property type="match status" value="1"/>
</dbReference>
<dbReference type="Pfam" id="PF02132">
    <property type="entry name" value="RecR_ZnF"/>
    <property type="match status" value="1"/>
</dbReference>
<dbReference type="Pfam" id="PF13662">
    <property type="entry name" value="Toprim_4"/>
    <property type="match status" value="1"/>
</dbReference>
<dbReference type="SMART" id="SM00493">
    <property type="entry name" value="TOPRIM"/>
    <property type="match status" value="1"/>
</dbReference>
<dbReference type="SUPFAM" id="SSF111304">
    <property type="entry name" value="Recombination protein RecR"/>
    <property type="match status" value="1"/>
</dbReference>
<dbReference type="PROSITE" id="PS01300">
    <property type="entry name" value="RECR"/>
    <property type="match status" value="1"/>
</dbReference>
<dbReference type="PROSITE" id="PS50880">
    <property type="entry name" value="TOPRIM"/>
    <property type="match status" value="1"/>
</dbReference>
<name>RECR_BACCZ</name>
<evidence type="ECO:0000255" key="1">
    <source>
        <dbReference type="HAMAP-Rule" id="MF_00017"/>
    </source>
</evidence>
<comment type="function">
    <text evidence="1">May play a role in DNA repair. It seems to be involved in an RecBC-independent recombinational process of DNA repair. It may act with RecF and RecO.</text>
</comment>
<comment type="similarity">
    <text evidence="1">Belongs to the RecR family.</text>
</comment>
<keyword id="KW-0227">DNA damage</keyword>
<keyword id="KW-0233">DNA recombination</keyword>
<keyword id="KW-0234">DNA repair</keyword>
<keyword id="KW-0479">Metal-binding</keyword>
<keyword id="KW-0862">Zinc</keyword>
<keyword id="KW-0863">Zinc-finger</keyword>
<protein>
    <recommendedName>
        <fullName evidence="1">Recombination protein RecR</fullName>
    </recommendedName>
</protein>
<sequence length="198" mass="21976">MHYPEPISKLIDSFMKLPGIGPKTAVRLAFFVLDMKEDDVLGFAKALVNAKRDLAYCSVCGHITDRDPCYICNDSHRDQSVVCVVQEPKDVIAMEKMKEYQGVYHVLRGAISPMEGIGPEDINIPQLLKRLHDETVQEVILATNPNIEGEATAMYISRLLKPTGIKVTRIAHGLPVGGDLEYADEVTLSKALEGRREV</sequence>